<evidence type="ECO:0000255" key="1">
    <source>
        <dbReference type="HAMAP-Rule" id="MF_00451"/>
    </source>
</evidence>
<organism>
    <name type="scientific">Methylorubrum populi (strain ATCC BAA-705 / NCIMB 13946 / BJ001)</name>
    <name type="common">Methylobacterium populi</name>
    <dbReference type="NCBI Taxonomy" id="441620"/>
    <lineage>
        <taxon>Bacteria</taxon>
        <taxon>Pseudomonadati</taxon>
        <taxon>Pseudomonadota</taxon>
        <taxon>Alphaproteobacteria</taxon>
        <taxon>Hyphomicrobiales</taxon>
        <taxon>Methylobacteriaceae</taxon>
        <taxon>Methylorubrum</taxon>
    </lineage>
</organism>
<sequence length="140" mass="15301">MANERTFSILKPDATRRNITGAVNAVIEAAGLRIVGQRRIRMTRAQAEKFYEVHKERPFFGELVEFMTSGPVVVQVLEGENAVAKYREVMGATNPAQAADGTIRKQFAESVGENTVHGSDSADNAKIEIAQFFTDADIAA</sequence>
<comment type="function">
    <text evidence="1">Major role in the synthesis of nucleoside triphosphates other than ATP. The ATP gamma phosphate is transferred to the NDP beta phosphate via a ping-pong mechanism, using a phosphorylated active-site intermediate.</text>
</comment>
<comment type="catalytic activity">
    <reaction evidence="1">
        <text>a 2'-deoxyribonucleoside 5'-diphosphate + ATP = a 2'-deoxyribonucleoside 5'-triphosphate + ADP</text>
        <dbReference type="Rhea" id="RHEA:44640"/>
        <dbReference type="ChEBI" id="CHEBI:30616"/>
        <dbReference type="ChEBI" id="CHEBI:61560"/>
        <dbReference type="ChEBI" id="CHEBI:73316"/>
        <dbReference type="ChEBI" id="CHEBI:456216"/>
        <dbReference type="EC" id="2.7.4.6"/>
    </reaction>
</comment>
<comment type="catalytic activity">
    <reaction evidence="1">
        <text>a ribonucleoside 5'-diphosphate + ATP = a ribonucleoside 5'-triphosphate + ADP</text>
        <dbReference type="Rhea" id="RHEA:18113"/>
        <dbReference type="ChEBI" id="CHEBI:30616"/>
        <dbReference type="ChEBI" id="CHEBI:57930"/>
        <dbReference type="ChEBI" id="CHEBI:61557"/>
        <dbReference type="ChEBI" id="CHEBI:456216"/>
        <dbReference type="EC" id="2.7.4.6"/>
    </reaction>
</comment>
<comment type="cofactor">
    <cofactor evidence="1">
        <name>Mg(2+)</name>
        <dbReference type="ChEBI" id="CHEBI:18420"/>
    </cofactor>
</comment>
<comment type="subunit">
    <text evidence="1">Homotetramer.</text>
</comment>
<comment type="subcellular location">
    <subcellularLocation>
        <location evidence="1">Cytoplasm</location>
    </subcellularLocation>
</comment>
<comment type="similarity">
    <text evidence="1">Belongs to the NDK family.</text>
</comment>
<accession>B1ZKE5</accession>
<protein>
    <recommendedName>
        <fullName evidence="1">Nucleoside diphosphate kinase</fullName>
        <shortName evidence="1">NDK</shortName>
        <shortName evidence="1">NDP kinase</shortName>
        <ecNumber evidence="1">2.7.4.6</ecNumber>
    </recommendedName>
    <alternativeName>
        <fullName evidence="1">Nucleoside-2-P kinase</fullName>
    </alternativeName>
</protein>
<dbReference type="EC" id="2.7.4.6" evidence="1"/>
<dbReference type="EMBL" id="CP001029">
    <property type="protein sequence ID" value="ACB80137.1"/>
    <property type="molecule type" value="Genomic_DNA"/>
</dbReference>
<dbReference type="RefSeq" id="WP_012453881.1">
    <property type="nucleotide sequence ID" value="NC_010725.1"/>
</dbReference>
<dbReference type="SMR" id="B1ZKE5"/>
<dbReference type="STRING" id="441620.Mpop_1974"/>
<dbReference type="KEGG" id="mpo:Mpop_1974"/>
<dbReference type="eggNOG" id="COG0105">
    <property type="taxonomic scope" value="Bacteria"/>
</dbReference>
<dbReference type="HOGENOM" id="CLU_060216_8_1_5"/>
<dbReference type="OrthoDB" id="9801161at2"/>
<dbReference type="Proteomes" id="UP000007136">
    <property type="component" value="Chromosome"/>
</dbReference>
<dbReference type="GO" id="GO:0005737">
    <property type="term" value="C:cytoplasm"/>
    <property type="evidence" value="ECO:0007669"/>
    <property type="project" value="UniProtKB-SubCell"/>
</dbReference>
<dbReference type="GO" id="GO:0005524">
    <property type="term" value="F:ATP binding"/>
    <property type="evidence" value="ECO:0007669"/>
    <property type="project" value="UniProtKB-UniRule"/>
</dbReference>
<dbReference type="GO" id="GO:0046872">
    <property type="term" value="F:metal ion binding"/>
    <property type="evidence" value="ECO:0007669"/>
    <property type="project" value="UniProtKB-KW"/>
</dbReference>
<dbReference type="GO" id="GO:0004550">
    <property type="term" value="F:nucleoside diphosphate kinase activity"/>
    <property type="evidence" value="ECO:0007669"/>
    <property type="project" value="UniProtKB-UniRule"/>
</dbReference>
<dbReference type="GO" id="GO:0006241">
    <property type="term" value="P:CTP biosynthetic process"/>
    <property type="evidence" value="ECO:0007669"/>
    <property type="project" value="UniProtKB-UniRule"/>
</dbReference>
<dbReference type="GO" id="GO:0006183">
    <property type="term" value="P:GTP biosynthetic process"/>
    <property type="evidence" value="ECO:0007669"/>
    <property type="project" value="UniProtKB-UniRule"/>
</dbReference>
<dbReference type="GO" id="GO:0006228">
    <property type="term" value="P:UTP biosynthetic process"/>
    <property type="evidence" value="ECO:0007669"/>
    <property type="project" value="UniProtKB-UniRule"/>
</dbReference>
<dbReference type="CDD" id="cd04413">
    <property type="entry name" value="NDPk_I"/>
    <property type="match status" value="1"/>
</dbReference>
<dbReference type="FunFam" id="3.30.70.141:FF:000003">
    <property type="entry name" value="Nucleoside diphosphate kinase"/>
    <property type="match status" value="1"/>
</dbReference>
<dbReference type="Gene3D" id="3.30.70.141">
    <property type="entry name" value="Nucleoside diphosphate kinase-like domain"/>
    <property type="match status" value="1"/>
</dbReference>
<dbReference type="HAMAP" id="MF_00451">
    <property type="entry name" value="NDP_kinase"/>
    <property type="match status" value="1"/>
</dbReference>
<dbReference type="InterPro" id="IPR034907">
    <property type="entry name" value="NDK-like_dom"/>
</dbReference>
<dbReference type="InterPro" id="IPR036850">
    <property type="entry name" value="NDK-like_dom_sf"/>
</dbReference>
<dbReference type="InterPro" id="IPR001564">
    <property type="entry name" value="Nucleoside_diP_kinase"/>
</dbReference>
<dbReference type="NCBIfam" id="NF001908">
    <property type="entry name" value="PRK00668.1"/>
    <property type="match status" value="1"/>
</dbReference>
<dbReference type="PANTHER" id="PTHR46161">
    <property type="entry name" value="NUCLEOSIDE DIPHOSPHATE KINASE"/>
    <property type="match status" value="1"/>
</dbReference>
<dbReference type="PANTHER" id="PTHR46161:SF3">
    <property type="entry name" value="NUCLEOSIDE DIPHOSPHATE KINASE DDB_G0292928-RELATED"/>
    <property type="match status" value="1"/>
</dbReference>
<dbReference type="Pfam" id="PF00334">
    <property type="entry name" value="NDK"/>
    <property type="match status" value="1"/>
</dbReference>
<dbReference type="PRINTS" id="PR01243">
    <property type="entry name" value="NUCDPKINASE"/>
</dbReference>
<dbReference type="SMART" id="SM00562">
    <property type="entry name" value="NDK"/>
    <property type="match status" value="1"/>
</dbReference>
<dbReference type="SUPFAM" id="SSF54919">
    <property type="entry name" value="Nucleoside diphosphate kinase, NDK"/>
    <property type="match status" value="1"/>
</dbReference>
<dbReference type="PROSITE" id="PS51374">
    <property type="entry name" value="NDPK_LIKE"/>
    <property type="match status" value="1"/>
</dbReference>
<gene>
    <name evidence="1" type="primary">ndk</name>
    <name type="ordered locus">Mpop_1974</name>
</gene>
<name>NDK_METPB</name>
<feature type="chain" id="PRO_1000192270" description="Nucleoside diphosphate kinase">
    <location>
        <begin position="1"/>
        <end position="140"/>
    </location>
</feature>
<feature type="active site" description="Pros-phosphohistidine intermediate" evidence="1">
    <location>
        <position position="117"/>
    </location>
</feature>
<feature type="binding site" evidence="1">
    <location>
        <position position="11"/>
    </location>
    <ligand>
        <name>ATP</name>
        <dbReference type="ChEBI" id="CHEBI:30616"/>
    </ligand>
</feature>
<feature type="binding site" evidence="1">
    <location>
        <position position="59"/>
    </location>
    <ligand>
        <name>ATP</name>
        <dbReference type="ChEBI" id="CHEBI:30616"/>
    </ligand>
</feature>
<feature type="binding site" evidence="1">
    <location>
        <position position="87"/>
    </location>
    <ligand>
        <name>ATP</name>
        <dbReference type="ChEBI" id="CHEBI:30616"/>
    </ligand>
</feature>
<feature type="binding site" evidence="1">
    <location>
        <position position="93"/>
    </location>
    <ligand>
        <name>ATP</name>
        <dbReference type="ChEBI" id="CHEBI:30616"/>
    </ligand>
</feature>
<feature type="binding site" evidence="1">
    <location>
        <position position="104"/>
    </location>
    <ligand>
        <name>ATP</name>
        <dbReference type="ChEBI" id="CHEBI:30616"/>
    </ligand>
</feature>
<feature type="binding site" evidence="1">
    <location>
        <position position="114"/>
    </location>
    <ligand>
        <name>ATP</name>
        <dbReference type="ChEBI" id="CHEBI:30616"/>
    </ligand>
</feature>
<reference key="1">
    <citation type="submission" date="2008-04" db="EMBL/GenBank/DDBJ databases">
        <title>Complete sequence of chromosome of Methylobacterium populi BJ001.</title>
        <authorList>
            <consortium name="US DOE Joint Genome Institute"/>
            <person name="Copeland A."/>
            <person name="Lucas S."/>
            <person name="Lapidus A."/>
            <person name="Glavina del Rio T."/>
            <person name="Dalin E."/>
            <person name="Tice H."/>
            <person name="Bruce D."/>
            <person name="Goodwin L."/>
            <person name="Pitluck S."/>
            <person name="Chertkov O."/>
            <person name="Brettin T."/>
            <person name="Detter J.C."/>
            <person name="Han C."/>
            <person name="Kuske C.R."/>
            <person name="Schmutz J."/>
            <person name="Larimer F."/>
            <person name="Land M."/>
            <person name="Hauser L."/>
            <person name="Kyrpides N."/>
            <person name="Mikhailova N."/>
            <person name="Marx C."/>
            <person name="Richardson P."/>
        </authorList>
    </citation>
    <scope>NUCLEOTIDE SEQUENCE [LARGE SCALE GENOMIC DNA]</scope>
    <source>
        <strain>ATCC BAA-705 / NCIMB 13946 / BJ001</strain>
    </source>
</reference>
<keyword id="KW-0067">ATP-binding</keyword>
<keyword id="KW-0963">Cytoplasm</keyword>
<keyword id="KW-0418">Kinase</keyword>
<keyword id="KW-0460">Magnesium</keyword>
<keyword id="KW-0479">Metal-binding</keyword>
<keyword id="KW-0546">Nucleotide metabolism</keyword>
<keyword id="KW-0547">Nucleotide-binding</keyword>
<keyword id="KW-0597">Phosphoprotein</keyword>
<keyword id="KW-0808">Transferase</keyword>
<proteinExistence type="inferred from homology"/>